<sequence>MYTPIPQSGSPFPASVQDPGLHIWRVEKLKPVPIARESHGIFFSGDSYLVLHNGPEEASHLHLWIGQQSSRDEQGACAVLAVHLNTLLGERPVQHREVQGNESDLFMSYFPRGLKYYREGGVESAFHKTTSGARGAAIRKLYQVKGKKNIRATERPLSWDSFNTGDCFILDLGQNIFAWCGGKSNILERNKARDLALAIRDSERQGKAQVEIITDGEEPAEMIQVLGPKPALKEGNPEEDITADQTRPNAQAAALYKVSDATGQMNLTKVADSSPFASELLIPDDCFVLDNGLCAQIYIWKGRKANEKERQAALQVADGFISRMRYSPNTQVEILPQGRESPIFKQFFKNWK</sequence>
<evidence type="ECO:0000250" key="1">
    <source>
        <dbReference type="UniProtKB" id="P40121"/>
    </source>
</evidence>
<evidence type="ECO:0000255" key="2"/>
<evidence type="ECO:0000269" key="3">
    <source>
    </source>
</evidence>
<evidence type="ECO:0000303" key="4">
    <source>
    </source>
</evidence>
<evidence type="ECO:0000305" key="5"/>
<evidence type="ECO:0007744" key="6">
    <source>
    </source>
</evidence>
<feature type="chain" id="PRO_0000218754" description="Macrophage-capping protein">
    <location>
        <begin position="1"/>
        <end position="352"/>
    </location>
</feature>
<feature type="repeat" description="Gelsolin-like 1">
    <location>
        <begin position="27"/>
        <end position="75"/>
    </location>
</feature>
<feature type="repeat" description="Gelsolin-like 2">
    <location>
        <begin position="150"/>
        <end position="190"/>
    </location>
</feature>
<feature type="repeat" description="Gelsolin-like 3">
    <location>
        <begin position="265"/>
        <end position="311"/>
    </location>
</feature>
<feature type="short sequence motif" description="Nuclear localization signal" evidence="2">
    <location>
        <begin position="139"/>
        <end position="148"/>
    </location>
</feature>
<feature type="modified residue" description="N-acetylmethionine" evidence="1">
    <location>
        <position position="1"/>
    </location>
</feature>
<feature type="modified residue" description="Phosphoserine" evidence="6">
    <location>
        <position position="341"/>
    </location>
</feature>
<feature type="sequence conflict" description="In Ref. 1; CAA38370." evidence="5" ref="1">
    <original>V</original>
    <variation>W</variation>
    <location>
        <position position="32"/>
    </location>
</feature>
<feature type="sequence conflict" description="In Ref. 1; CAA38370." evidence="5" ref="1">
    <original>V</original>
    <variation>L</variation>
    <location>
        <position position="98"/>
    </location>
</feature>
<feature type="sequence conflict" description="In Ref. 1; CAA38370." evidence="5" ref="1">
    <location>
        <position position="117"/>
    </location>
</feature>
<feature type="sequence conflict" description="In Ref. 1." evidence="5" ref="1">
    <original>VESAFHKTTSGARG</original>
    <variation>GRVGISQDNLRATP</variation>
    <location>
        <begin position="122"/>
        <end position="135"/>
    </location>
</feature>
<feature type="sequence conflict" description="In Ref. 1; CAA38370." evidence="5" ref="1">
    <original>P</original>
    <variation>A</variation>
    <location>
        <position position="156"/>
    </location>
</feature>
<feature type="sequence conflict" description="In Ref. 3; AA sequence." evidence="5" ref="3">
    <original>Q</original>
    <variation>E</variation>
    <location>
        <position position="245"/>
    </location>
</feature>
<feature type="sequence conflict" description="In Ref. 1 and 3; AA sequence." evidence="5" ref="1 3">
    <location>
        <begin position="247"/>
        <end position="248"/>
    </location>
</feature>
<feature type="sequence conflict" description="In Ref. 1; CAA38370." evidence="5" ref="1">
    <original>AQ</original>
    <variation>GK</variation>
    <location>
        <begin position="295"/>
        <end position="296"/>
    </location>
</feature>
<feature type="sequence conflict" description="In Ref. 1; CAA38370." evidence="5" ref="1">
    <original>P</original>
    <variation>R</variation>
    <location>
        <position position="336"/>
    </location>
</feature>
<comment type="function">
    <text>Calcium-sensitive protein which reversibly blocks the barbed ends of actin filaments but does not sever preformed actin filaments. May play an important role in macrophage function. May play a role in regulating cytoplasmic and/or nuclear structures through potential interactions with actin. May bind DNA. Uncapping occurs either when Ca(2+) falls or when the concentration of polyphosphoinositide rises, both at low and high Ca(2+).</text>
</comment>
<comment type="subunit">
    <text evidence="1">Interacts with NUP62. Interacts with NUTF2 and RAN; involved in CAPG nuclear import.</text>
</comment>
<comment type="subcellular location">
    <subcellularLocation>
        <location evidence="3">Nucleus</location>
    </subcellularLocation>
    <subcellularLocation>
        <location evidence="3">Cytoplasm</location>
    </subcellularLocation>
    <subcellularLocation>
        <location evidence="1">Melanosome</location>
    </subcellularLocation>
    <subcellularLocation>
        <location>Cell projection</location>
        <location>Lamellipodium</location>
    </subcellularLocation>
    <subcellularLocation>
        <location>Cell projection</location>
        <location>Ruffle</location>
    </subcellularLocation>
    <text evidence="3">In macrophages, may be predominantly cytoplasmic. Nuclear localization was observed in fibroblasts. In macrophages, present at the membrane-cytoplasm interface. In activated macrophages, concentrated in the ruffles of the leading lamellipodia.</text>
</comment>
<comment type="tissue specificity">
    <text evidence="3">Present in a large variety of tissues and is particularly abundant in kidney and lung. Highly expressed in macrophages (at protein level) (PubMed:8293478).</text>
</comment>
<comment type="developmental stage">
    <text evidence="3">Up-regulated during HL60 cell differentiation into macrophages (at protein level).</text>
</comment>
<comment type="PTM">
    <text>Phosphorylated. Nuclear GCAP39 is more highly phosphorylated than cytoplasmic GCAP39.</text>
</comment>
<comment type="similarity">
    <text evidence="5">Belongs to the villin/gelsolin family.</text>
</comment>
<comment type="caution">
    <text evidence="5">This protein was originally thought to be a DNA-binding protein with a helix-loop-helix domain.</text>
</comment>
<accession>P24452</accession>
<protein>
    <recommendedName>
        <fullName>Macrophage-capping protein</fullName>
    </recommendedName>
    <alternativeName>
        <fullName>Actin regulatory protein CAP-G</fullName>
    </alternativeName>
    <alternativeName>
        <fullName evidence="4">Actin-capping protein GCAP39</fullName>
    </alternativeName>
    <alternativeName>
        <fullName>Myc basic motif homolog 1</fullName>
    </alternativeName>
</protein>
<gene>
    <name type="primary">Capg</name>
    <name type="synonym">Mbh1</name>
</gene>
<organism>
    <name type="scientific">Mus musculus</name>
    <name type="common">Mouse</name>
    <dbReference type="NCBI Taxonomy" id="10090"/>
    <lineage>
        <taxon>Eukaryota</taxon>
        <taxon>Metazoa</taxon>
        <taxon>Chordata</taxon>
        <taxon>Craniata</taxon>
        <taxon>Vertebrata</taxon>
        <taxon>Euteleostomi</taxon>
        <taxon>Mammalia</taxon>
        <taxon>Eutheria</taxon>
        <taxon>Euarchontoglires</taxon>
        <taxon>Glires</taxon>
        <taxon>Rodentia</taxon>
        <taxon>Myomorpha</taxon>
        <taxon>Muroidea</taxon>
        <taxon>Muridae</taxon>
        <taxon>Murinae</taxon>
        <taxon>Mus</taxon>
        <taxon>Mus</taxon>
    </lineage>
</organism>
<proteinExistence type="evidence at protein level"/>
<reference key="1">
    <citation type="journal article" date="1991" name="EMBO J.">
        <title>Mbh 1: a novel gelsolin/severin-related protein which binds actin in vitro and exhibits nuclear localization in vivo.</title>
        <authorList>
            <person name="Prendergast G.C."/>
            <person name="Ziff E.B."/>
        </authorList>
    </citation>
    <scope>NUCLEOTIDE SEQUENCE [MRNA]</scope>
    <source>
        <strain>NIH Swiss</strain>
    </source>
</reference>
<reference key="2">
    <citation type="journal article" date="1990" name="Science">
        <title>gCap39, a calcium ion- and polyphosphoinositide-regulated actin capping protein.</title>
        <authorList>
            <person name="Yu F.-X."/>
            <person name="Johnston P.A."/>
            <person name="Suedhof T.C."/>
            <person name="Yin H.L."/>
        </authorList>
    </citation>
    <scope>NUCLEOTIDE SEQUENCE [MRNA]</scope>
    <source>
        <tissue>Kidney</tissue>
    </source>
</reference>
<reference key="3">
    <citation type="journal article" date="1990" name="J. Biol. Chem.">
        <title>Purification and expression of gCap39. An intracellular and secreted Ca2(+)-dependent actin-binding protein enriched in mononuclear phagocytes.</title>
        <authorList>
            <person name="Johnston P.A."/>
            <person name="Yu F.-X."/>
            <person name="Reynolds G.A."/>
            <person name="Yin H.L."/>
            <person name="Moomaw C.R."/>
            <person name="Slaughter C.A."/>
            <person name="Suedhof T.C."/>
        </authorList>
    </citation>
    <scope>PARTIAL PROTEIN SEQUENCE</scope>
</reference>
<reference key="4">
    <citation type="journal article" date="1993" name="Cell Motil. Cytoskeleton">
        <title>gCap39 is a nuclear and cytoplasmic protein.</title>
        <authorList>
            <person name="Onoda K."/>
            <person name="Yu F.-X."/>
            <person name="Yin H.L."/>
        </authorList>
    </citation>
    <scope>SUBCELLULAR LOCATION</scope>
    <scope>TISSUE SPECIFICITY</scope>
    <scope>DEVELOPMENTAL STAGE</scope>
</reference>
<reference key="5">
    <citation type="journal article" date="2010" name="Cell">
        <title>A tissue-specific atlas of mouse protein phosphorylation and expression.</title>
        <authorList>
            <person name="Huttlin E.L."/>
            <person name="Jedrychowski M.P."/>
            <person name="Elias J.E."/>
            <person name="Goswami T."/>
            <person name="Rad R."/>
            <person name="Beausoleil S.A."/>
            <person name="Villen J."/>
            <person name="Haas W."/>
            <person name="Sowa M.E."/>
            <person name="Gygi S.P."/>
        </authorList>
    </citation>
    <scope>PHOSPHORYLATION [LARGE SCALE ANALYSIS] AT SER-341</scope>
    <scope>IDENTIFICATION BY MASS SPECTROMETRY [LARGE SCALE ANALYSIS]</scope>
    <source>
        <tissue>Brown adipose tissue</tissue>
        <tissue>Heart</tissue>
        <tissue>Kidney</tissue>
        <tissue>Liver</tissue>
        <tissue>Lung</tissue>
        <tissue>Pancreas</tissue>
        <tissue>Spleen</tissue>
        <tissue>Testis</tissue>
    </source>
</reference>
<dbReference type="EMBL" id="X54511">
    <property type="protein sequence ID" value="CAA38370.1"/>
    <property type="molecule type" value="mRNA"/>
</dbReference>
<dbReference type="PIR" id="A39834">
    <property type="entry name" value="A39834"/>
</dbReference>
<dbReference type="PIR" id="S15011">
    <property type="entry name" value="S15011"/>
</dbReference>
<dbReference type="SMR" id="P24452"/>
<dbReference type="DIP" id="DIP-61550N"/>
<dbReference type="FunCoup" id="P24452">
    <property type="interactions" value="278"/>
</dbReference>
<dbReference type="IntAct" id="P24452">
    <property type="interactions" value="2"/>
</dbReference>
<dbReference type="STRING" id="10090.ENSMUSP00000109705"/>
<dbReference type="CarbonylDB" id="P24452"/>
<dbReference type="GlyGen" id="P24452">
    <property type="glycosylation" value="1 site, 1 O-linked glycan (1 site)"/>
</dbReference>
<dbReference type="iPTMnet" id="P24452"/>
<dbReference type="PhosphoSitePlus" id="P24452"/>
<dbReference type="SwissPalm" id="P24452"/>
<dbReference type="jPOST" id="P24452"/>
<dbReference type="PaxDb" id="10090-ENSMUSP00000109705"/>
<dbReference type="PeptideAtlas" id="P24452"/>
<dbReference type="ProteomicsDB" id="281771"/>
<dbReference type="Pumba" id="P24452"/>
<dbReference type="AGR" id="MGI:1098259"/>
<dbReference type="MGI" id="MGI:1098259">
    <property type="gene designation" value="Capg"/>
</dbReference>
<dbReference type="eggNOG" id="KOG0443">
    <property type="taxonomic scope" value="Eukaryota"/>
</dbReference>
<dbReference type="InParanoid" id="P24452"/>
<dbReference type="ChiTaRS" id="Capg">
    <property type="organism name" value="mouse"/>
</dbReference>
<dbReference type="PRO" id="PR:P24452"/>
<dbReference type="Proteomes" id="UP000000589">
    <property type="component" value="Unplaced"/>
</dbReference>
<dbReference type="RNAct" id="P24452">
    <property type="molecule type" value="protein"/>
</dbReference>
<dbReference type="GO" id="GO:0030027">
    <property type="term" value="C:lamellipodium"/>
    <property type="evidence" value="ECO:0007669"/>
    <property type="project" value="UniProtKB-SubCell"/>
</dbReference>
<dbReference type="GO" id="GO:0042470">
    <property type="term" value="C:melanosome"/>
    <property type="evidence" value="ECO:0007669"/>
    <property type="project" value="UniProtKB-SubCell"/>
</dbReference>
<dbReference type="GO" id="GO:0005634">
    <property type="term" value="C:nucleus"/>
    <property type="evidence" value="ECO:0007669"/>
    <property type="project" value="UniProtKB-SubCell"/>
</dbReference>
<dbReference type="GO" id="GO:0045335">
    <property type="term" value="C:phagocytic vesicle"/>
    <property type="evidence" value="ECO:0000314"/>
    <property type="project" value="MGI"/>
</dbReference>
<dbReference type="GO" id="GO:0001726">
    <property type="term" value="C:ruffle"/>
    <property type="evidence" value="ECO:0007669"/>
    <property type="project" value="UniProtKB-SubCell"/>
</dbReference>
<dbReference type="GO" id="GO:0051015">
    <property type="term" value="F:actin filament binding"/>
    <property type="evidence" value="ECO:0007669"/>
    <property type="project" value="InterPro"/>
</dbReference>
<dbReference type="GO" id="GO:0051693">
    <property type="term" value="P:actin filament capping"/>
    <property type="evidence" value="ECO:0007669"/>
    <property type="project" value="UniProtKB-KW"/>
</dbReference>
<dbReference type="GO" id="GO:0030031">
    <property type="term" value="P:cell projection assembly"/>
    <property type="evidence" value="ECO:0000314"/>
    <property type="project" value="MGI"/>
</dbReference>
<dbReference type="GO" id="GO:0071346">
    <property type="term" value="P:cellular response to type II interferon"/>
    <property type="evidence" value="ECO:0000314"/>
    <property type="project" value="MGI"/>
</dbReference>
<dbReference type="CDD" id="cd11290">
    <property type="entry name" value="gelsolin_S1_like"/>
    <property type="match status" value="1"/>
</dbReference>
<dbReference type="CDD" id="cd11289">
    <property type="entry name" value="gelsolin_S2_like"/>
    <property type="match status" value="1"/>
</dbReference>
<dbReference type="CDD" id="cd11292">
    <property type="entry name" value="gelsolin_S3_like"/>
    <property type="match status" value="1"/>
</dbReference>
<dbReference type="FunFam" id="3.40.20.10:FF:000040">
    <property type="entry name" value="macrophage-capping protein-like isoform X1"/>
    <property type="match status" value="1"/>
</dbReference>
<dbReference type="FunFam" id="3.40.20.10:FF:000037">
    <property type="entry name" value="macrophage-capping protein-like isoform X2"/>
    <property type="match status" value="1"/>
</dbReference>
<dbReference type="FunFam" id="3.40.20.10:FF:000043">
    <property type="entry name" value="macrophage-capping protein-like isoform X2"/>
    <property type="match status" value="1"/>
</dbReference>
<dbReference type="Gene3D" id="3.40.20.10">
    <property type="entry name" value="Severin"/>
    <property type="match status" value="3"/>
</dbReference>
<dbReference type="InterPro" id="IPR029006">
    <property type="entry name" value="ADF-H/Gelsolin-like_dom_sf"/>
</dbReference>
<dbReference type="InterPro" id="IPR007123">
    <property type="entry name" value="Gelsolin-like_dom"/>
</dbReference>
<dbReference type="InterPro" id="IPR007122">
    <property type="entry name" value="Villin/Gelsolin"/>
</dbReference>
<dbReference type="PANTHER" id="PTHR11977:SF127">
    <property type="entry name" value="MACROPHAGE-CAPPING PROTEIN"/>
    <property type="match status" value="1"/>
</dbReference>
<dbReference type="PANTHER" id="PTHR11977">
    <property type="entry name" value="VILLIN"/>
    <property type="match status" value="1"/>
</dbReference>
<dbReference type="Pfam" id="PF00626">
    <property type="entry name" value="Gelsolin"/>
    <property type="match status" value="3"/>
</dbReference>
<dbReference type="PRINTS" id="PR00597">
    <property type="entry name" value="GELSOLIN"/>
</dbReference>
<dbReference type="SMART" id="SM00262">
    <property type="entry name" value="GEL"/>
    <property type="match status" value="3"/>
</dbReference>
<dbReference type="SUPFAM" id="SSF55753">
    <property type="entry name" value="Actin depolymerizing proteins"/>
    <property type="match status" value="3"/>
</dbReference>
<keyword id="KW-0007">Acetylation</keyword>
<keyword id="KW-0117">Actin capping</keyword>
<keyword id="KW-0009">Actin-binding</keyword>
<keyword id="KW-0966">Cell projection</keyword>
<keyword id="KW-0963">Cytoplasm</keyword>
<keyword id="KW-0903">Direct protein sequencing</keyword>
<keyword id="KW-0539">Nucleus</keyword>
<keyword id="KW-0597">Phosphoprotein</keyword>
<keyword id="KW-1185">Reference proteome</keyword>
<keyword id="KW-0677">Repeat</keyword>
<name>CAPG_MOUSE</name>